<feature type="signal peptide" evidence="5">
    <location>
        <begin position="1"/>
        <end position="25"/>
    </location>
</feature>
<feature type="chain" id="PRO_0000226054" description="Protein Wnt-2">
    <location>
        <begin position="26"/>
        <end position="360"/>
    </location>
</feature>
<feature type="lipid moiety-binding region" description="O-palmitoleoyl serine; by PORCN" evidence="4">
    <location>
        <position position="212"/>
    </location>
</feature>
<feature type="glycosylation site" description="N-linked (GlcNAc...) asparagine" evidence="5">
    <location>
        <position position="295"/>
    </location>
</feature>
<feature type="disulfide bond" evidence="3">
    <location>
        <begin position="76"/>
        <end position="87"/>
    </location>
</feature>
<feature type="disulfide bond" evidence="3">
    <location>
        <begin position="127"/>
        <end position="135"/>
    </location>
</feature>
<feature type="disulfide bond" evidence="3">
    <location>
        <begin position="137"/>
        <end position="157"/>
    </location>
</feature>
<feature type="disulfide bond" evidence="3">
    <location>
        <begin position="206"/>
        <end position="220"/>
    </location>
</feature>
<feature type="disulfide bond" evidence="3">
    <location>
        <begin position="208"/>
        <end position="215"/>
    </location>
</feature>
<feature type="disulfide bond" evidence="3">
    <location>
        <begin position="278"/>
        <end position="309"/>
    </location>
</feature>
<feature type="disulfide bond" evidence="3">
    <location>
        <begin position="294"/>
        <end position="304"/>
    </location>
</feature>
<feature type="disulfide bond" evidence="3">
    <location>
        <begin position="308"/>
        <end position="348"/>
    </location>
</feature>
<feature type="disulfide bond" evidence="3">
    <location>
        <begin position="324"/>
        <end position="339"/>
    </location>
</feature>
<feature type="disulfide bond" evidence="3">
    <location>
        <begin position="326"/>
        <end position="336"/>
    </location>
</feature>
<feature type="disulfide bond" evidence="3">
    <location>
        <begin position="331"/>
        <end position="332"/>
    </location>
</feature>
<organism>
    <name type="scientific">Pan troglodytes</name>
    <name type="common">Chimpanzee</name>
    <dbReference type="NCBI Taxonomy" id="9598"/>
    <lineage>
        <taxon>Eukaryota</taxon>
        <taxon>Metazoa</taxon>
        <taxon>Chordata</taxon>
        <taxon>Craniata</taxon>
        <taxon>Vertebrata</taxon>
        <taxon>Euteleostomi</taxon>
        <taxon>Mammalia</taxon>
        <taxon>Eutheria</taxon>
        <taxon>Euarchontoglires</taxon>
        <taxon>Primates</taxon>
        <taxon>Haplorrhini</taxon>
        <taxon>Catarrhini</taxon>
        <taxon>Hominidae</taxon>
        <taxon>Pan</taxon>
    </lineage>
</organism>
<evidence type="ECO:0000250" key="1">
    <source>
        <dbReference type="UniProtKB" id="P09544"/>
    </source>
</evidence>
<evidence type="ECO:0000250" key="2">
    <source>
        <dbReference type="UniProtKB" id="P21552"/>
    </source>
</evidence>
<evidence type="ECO:0000250" key="3">
    <source>
        <dbReference type="UniProtKB" id="P28026"/>
    </source>
</evidence>
<evidence type="ECO:0000250" key="4">
    <source>
        <dbReference type="UniProtKB" id="P56704"/>
    </source>
</evidence>
<evidence type="ECO:0000255" key="5"/>
<evidence type="ECO:0000305" key="6"/>
<protein>
    <recommendedName>
        <fullName>Protein Wnt-2</fullName>
    </recommendedName>
</protein>
<proteinExistence type="inferred from homology"/>
<name>WNT2_PANTR</name>
<keyword id="KW-0217">Developmental protein</keyword>
<keyword id="KW-1015">Disulfide bond</keyword>
<keyword id="KW-0272">Extracellular matrix</keyword>
<keyword id="KW-0325">Glycoprotein</keyword>
<keyword id="KW-0449">Lipoprotein</keyword>
<keyword id="KW-1185">Reference proteome</keyword>
<keyword id="KW-0964">Secreted</keyword>
<keyword id="KW-0732">Signal</keyword>
<keyword id="KW-0879">Wnt signaling pathway</keyword>
<gene>
    <name type="primary">WNT2</name>
</gene>
<accession>Q2QLE7</accession>
<reference key="1">
    <citation type="journal article" date="2003" name="Nature">
        <title>Comparative analyses of multi-species sequences from targeted genomic regions.</title>
        <authorList>
            <person name="Thomas J.W."/>
            <person name="Touchman J.W."/>
            <person name="Blakesley R.W."/>
            <person name="Bouffard G.G."/>
            <person name="Beckstrom-Sternberg S.M."/>
            <person name="Margulies E.H."/>
            <person name="Blanchette M."/>
            <person name="Siepel A.C."/>
            <person name="Thomas P.J."/>
            <person name="McDowell J.C."/>
            <person name="Maskeri B."/>
            <person name="Hansen N.F."/>
            <person name="Schwartz M.S."/>
            <person name="Weber R.J."/>
            <person name="Kent W.J."/>
            <person name="Karolchik D."/>
            <person name="Bruen T.C."/>
            <person name="Bevan R."/>
            <person name="Cutler D.J."/>
            <person name="Schwartz S."/>
            <person name="Elnitski L."/>
            <person name="Idol J.R."/>
            <person name="Prasad A.B."/>
            <person name="Lee-Lin S.-Q."/>
            <person name="Maduro V.V.B."/>
            <person name="Summers T.J."/>
            <person name="Portnoy M.E."/>
            <person name="Dietrich N.L."/>
            <person name="Akhter N."/>
            <person name="Ayele K."/>
            <person name="Benjamin B."/>
            <person name="Cariaga K."/>
            <person name="Brinkley C.P."/>
            <person name="Brooks S.Y."/>
            <person name="Granite S."/>
            <person name="Guan X."/>
            <person name="Gupta J."/>
            <person name="Haghighi P."/>
            <person name="Ho S.-L."/>
            <person name="Huang M.C."/>
            <person name="Karlins E."/>
            <person name="Laric P.L."/>
            <person name="Legaspi R."/>
            <person name="Lim M.J."/>
            <person name="Maduro Q.L."/>
            <person name="Masiello C.A."/>
            <person name="Mastrian S.D."/>
            <person name="McCloskey J.C."/>
            <person name="Pearson R."/>
            <person name="Stantripop S."/>
            <person name="Tiongson E.E."/>
            <person name="Tran J.T."/>
            <person name="Tsurgeon C."/>
            <person name="Vogt J.L."/>
            <person name="Walker M.A."/>
            <person name="Wetherby K.D."/>
            <person name="Wiggins L.S."/>
            <person name="Young A.C."/>
            <person name="Zhang L.-H."/>
            <person name="Osoegawa K."/>
            <person name="Zhu B."/>
            <person name="Zhao B."/>
            <person name="Shu C.L."/>
            <person name="De Jong P.J."/>
            <person name="Lawrence C.E."/>
            <person name="Smit A.F."/>
            <person name="Chakravarti A."/>
            <person name="Haussler D."/>
            <person name="Green P."/>
            <person name="Miller W."/>
            <person name="Green E.D."/>
        </authorList>
    </citation>
    <scope>NUCLEOTIDE SEQUENCE [LARGE SCALE GENOMIC DNA]</scope>
</reference>
<sequence length="360" mass="40444">MNAPLGGIWLWLPLLLTWLTPEVNSSWWYMRATGGSSRVMCDNVPGLVSSQRQLCHRHPDVMRAISQGVAEWTAECQHQFRQHRWNCNTLDRDHSLFGRVLLRSSRESAFVYAISSAGVVFAITRACSQGEVKSCSCDPKKMGSAKDSKGIFDWGGCSDNIDYGIKFARAFVDAKERKGKDARALMNLHNNRAGRKAVKRFLKQECKCHGVSGSCTLRTCWLAMADFRKTGDYLWRKYNGAIQVVMNQDGTGFTVANERFKKPTKNDLVYFENSPDYCIRDREAGSLGTAGRVCNLTSRGMDSCEVMCCGRGYDTSHVTRMTKCGCKFHWCCAVRCQDCLEALDVHTCKAPKNADWTTPT</sequence>
<comment type="function">
    <text evidence="1 2">Ligand for members of the frizzled family of seven transmembrane receptors. Functions in the canonical Wnt signaling pathway that results in activation of transcription factors of the TCF/LEF family (By similarity). Functions as a upstream regulator of FGF10 expression. Plays an important role in embryonic lung development. May contribute to embryonic brain development by regulating the proliferation of dopaminergic precursors and neurons (By similarity).</text>
</comment>
<comment type="subcellular location">
    <subcellularLocation>
        <location evidence="1">Secreted</location>
        <location evidence="1">Extracellular space</location>
        <location evidence="1">Extracellular matrix</location>
    </subcellularLocation>
    <subcellularLocation>
        <location evidence="1">Secreted</location>
    </subcellularLocation>
</comment>
<comment type="PTM">
    <text evidence="1">Palmitoleoylation is required for efficient binding to frizzled receptors. Depalmitoleoylation leads to Wnt signaling pathway inhibition.</text>
</comment>
<comment type="similarity">
    <text evidence="6">Belongs to the Wnt family.</text>
</comment>
<dbReference type="EMBL" id="DP000016">
    <property type="protein sequence ID" value="AAR16251.1"/>
    <property type="molecule type" value="Genomic_DNA"/>
</dbReference>
<dbReference type="RefSeq" id="NP_001129320.1">
    <property type="nucleotide sequence ID" value="NM_001135848.1"/>
</dbReference>
<dbReference type="SMR" id="Q2QLE7"/>
<dbReference type="FunCoup" id="Q2QLE7">
    <property type="interactions" value="421"/>
</dbReference>
<dbReference type="STRING" id="9598.ENSPTRP00000033593"/>
<dbReference type="GlyCosmos" id="Q2QLE7">
    <property type="glycosylation" value="1 site, No reported glycans"/>
</dbReference>
<dbReference type="PaxDb" id="9598-ENSPTRP00000033593"/>
<dbReference type="Ensembl" id="ENSPTRT00000036335.5">
    <property type="protein sequence ID" value="ENSPTRP00000033593.4"/>
    <property type="gene ID" value="ENSPTRG00000019617.5"/>
</dbReference>
<dbReference type="GeneID" id="463673"/>
<dbReference type="KEGG" id="ptr:463673"/>
<dbReference type="CTD" id="7472"/>
<dbReference type="VGNC" id="VGNC:4565">
    <property type="gene designation" value="WNT2"/>
</dbReference>
<dbReference type="eggNOG" id="KOG3913">
    <property type="taxonomic scope" value="Eukaryota"/>
</dbReference>
<dbReference type="GeneTree" id="ENSGT00940000159231"/>
<dbReference type="HOGENOM" id="CLU_033039_1_4_1"/>
<dbReference type="InParanoid" id="Q2QLE7"/>
<dbReference type="OMA" id="ITRMTKC"/>
<dbReference type="OrthoDB" id="1368at9604"/>
<dbReference type="TreeFam" id="TF105310"/>
<dbReference type="Proteomes" id="UP000002277">
    <property type="component" value="Chromosome 7"/>
</dbReference>
<dbReference type="Bgee" id="ENSPTRG00000019617">
    <property type="expression patterns" value="Expressed in lung and 9 other cell types or tissues"/>
</dbReference>
<dbReference type="GO" id="GO:0005737">
    <property type="term" value="C:cytoplasm"/>
    <property type="evidence" value="ECO:0007669"/>
    <property type="project" value="Ensembl"/>
</dbReference>
<dbReference type="GO" id="GO:0005615">
    <property type="term" value="C:extracellular space"/>
    <property type="evidence" value="ECO:0000318"/>
    <property type="project" value="GO_Central"/>
</dbReference>
<dbReference type="GO" id="GO:0005125">
    <property type="term" value="F:cytokine activity"/>
    <property type="evidence" value="ECO:0000318"/>
    <property type="project" value="GO_Central"/>
</dbReference>
<dbReference type="GO" id="GO:0005109">
    <property type="term" value="F:frizzled binding"/>
    <property type="evidence" value="ECO:0000318"/>
    <property type="project" value="GO_Central"/>
</dbReference>
<dbReference type="GO" id="GO:0055009">
    <property type="term" value="P:atrial cardiac muscle tissue morphogenesis"/>
    <property type="evidence" value="ECO:0007669"/>
    <property type="project" value="Ensembl"/>
</dbReference>
<dbReference type="GO" id="GO:0060070">
    <property type="term" value="P:canonical Wnt signaling pathway"/>
    <property type="evidence" value="ECO:0000318"/>
    <property type="project" value="GO_Central"/>
</dbReference>
<dbReference type="GO" id="GO:0060317">
    <property type="term" value="P:cardiac epithelial to mesenchymal transition"/>
    <property type="evidence" value="ECO:0007669"/>
    <property type="project" value="Ensembl"/>
</dbReference>
<dbReference type="GO" id="GO:0060038">
    <property type="term" value="P:cardiac muscle cell proliferation"/>
    <property type="evidence" value="ECO:0007669"/>
    <property type="project" value="Ensembl"/>
</dbReference>
<dbReference type="GO" id="GO:0045165">
    <property type="term" value="P:cell fate commitment"/>
    <property type="evidence" value="ECO:0000318"/>
    <property type="project" value="GO_Central"/>
</dbReference>
<dbReference type="GO" id="GO:0033278">
    <property type="term" value="P:cell proliferation in midbrain"/>
    <property type="evidence" value="ECO:0007669"/>
    <property type="project" value="Ensembl"/>
</dbReference>
<dbReference type="GO" id="GO:0007267">
    <property type="term" value="P:cell-cell signaling"/>
    <property type="evidence" value="ECO:0007669"/>
    <property type="project" value="Ensembl"/>
</dbReference>
<dbReference type="GO" id="GO:0071560">
    <property type="term" value="P:cellular response to transforming growth factor beta stimulus"/>
    <property type="evidence" value="ECO:0007669"/>
    <property type="project" value="Ensembl"/>
</dbReference>
<dbReference type="GO" id="GO:0060502">
    <property type="term" value="P:epithelial cell proliferation involved in lung morphogenesis"/>
    <property type="evidence" value="ECO:0007669"/>
    <property type="project" value="Ensembl"/>
</dbReference>
<dbReference type="GO" id="GO:0060716">
    <property type="term" value="P:labyrinthine layer blood vessel development"/>
    <property type="evidence" value="ECO:0007669"/>
    <property type="project" value="Ensembl"/>
</dbReference>
<dbReference type="GO" id="GO:0060492">
    <property type="term" value="P:lung induction"/>
    <property type="evidence" value="ECO:0007669"/>
    <property type="project" value="Ensembl"/>
</dbReference>
<dbReference type="GO" id="GO:0061180">
    <property type="term" value="P:mammary gland epithelium development"/>
    <property type="evidence" value="ECO:0007669"/>
    <property type="project" value="Ensembl"/>
</dbReference>
<dbReference type="GO" id="GO:0010463">
    <property type="term" value="P:mesenchymal cell proliferation"/>
    <property type="evidence" value="ECO:0007669"/>
    <property type="project" value="Ensembl"/>
</dbReference>
<dbReference type="GO" id="GO:1904948">
    <property type="term" value="P:midbrain dopaminergic neuron differentiation"/>
    <property type="evidence" value="ECO:0007669"/>
    <property type="project" value="Ensembl"/>
</dbReference>
<dbReference type="GO" id="GO:0030182">
    <property type="term" value="P:neuron differentiation"/>
    <property type="evidence" value="ECO:0000318"/>
    <property type="project" value="GO_Central"/>
</dbReference>
<dbReference type="GO" id="GO:0060045">
    <property type="term" value="P:positive regulation of cardiac muscle cell proliferation"/>
    <property type="evidence" value="ECO:0007669"/>
    <property type="project" value="Ensembl"/>
</dbReference>
<dbReference type="GO" id="GO:0060501">
    <property type="term" value="P:positive regulation of epithelial cell proliferation involved in lung morphogenesis"/>
    <property type="evidence" value="ECO:0007669"/>
    <property type="project" value="Ensembl"/>
</dbReference>
<dbReference type="GO" id="GO:0048146">
    <property type="term" value="P:positive regulation of fibroblast proliferation"/>
    <property type="evidence" value="ECO:0007669"/>
    <property type="project" value="Ensembl"/>
</dbReference>
<dbReference type="GO" id="GO:0002053">
    <property type="term" value="P:positive regulation of mesenchymal cell proliferation"/>
    <property type="evidence" value="ECO:0007669"/>
    <property type="project" value="Ensembl"/>
</dbReference>
<dbReference type="GO" id="GO:0050769">
    <property type="term" value="P:positive regulation of neurogenesis"/>
    <property type="evidence" value="ECO:0007669"/>
    <property type="project" value="Ensembl"/>
</dbReference>
<dbReference type="GO" id="GO:0045944">
    <property type="term" value="P:positive regulation of transcription by RNA polymerase II"/>
    <property type="evidence" value="ECO:0007669"/>
    <property type="project" value="Ensembl"/>
</dbReference>
<dbReference type="CDD" id="cd19345">
    <property type="entry name" value="Wnt_Wnt2"/>
    <property type="match status" value="1"/>
</dbReference>
<dbReference type="FunFam" id="3.30.2460.20:FF:000001">
    <property type="entry name" value="Wnt homolog"/>
    <property type="match status" value="1"/>
</dbReference>
<dbReference type="Gene3D" id="3.30.2460.20">
    <property type="match status" value="1"/>
</dbReference>
<dbReference type="InterPro" id="IPR005817">
    <property type="entry name" value="Wnt"/>
</dbReference>
<dbReference type="InterPro" id="IPR009140">
    <property type="entry name" value="Wnt2"/>
</dbReference>
<dbReference type="InterPro" id="IPR043158">
    <property type="entry name" value="Wnt_C"/>
</dbReference>
<dbReference type="InterPro" id="IPR018161">
    <property type="entry name" value="Wnt_CS"/>
</dbReference>
<dbReference type="PANTHER" id="PTHR12027:SF86">
    <property type="entry name" value="PROTEIN WNT-2"/>
    <property type="match status" value="1"/>
</dbReference>
<dbReference type="PANTHER" id="PTHR12027">
    <property type="entry name" value="WNT RELATED"/>
    <property type="match status" value="1"/>
</dbReference>
<dbReference type="Pfam" id="PF00110">
    <property type="entry name" value="wnt"/>
    <property type="match status" value="1"/>
</dbReference>
<dbReference type="PRINTS" id="PR01842">
    <property type="entry name" value="WNT2PROTEIN"/>
</dbReference>
<dbReference type="PRINTS" id="PR01349">
    <property type="entry name" value="WNTPROTEIN"/>
</dbReference>
<dbReference type="SMART" id="SM00097">
    <property type="entry name" value="WNT1"/>
    <property type="match status" value="1"/>
</dbReference>
<dbReference type="PROSITE" id="PS00246">
    <property type="entry name" value="WNT1"/>
    <property type="match status" value="1"/>
</dbReference>